<reference key="1">
    <citation type="journal article" date="2002" name="Proc. Natl. Acad. Sci. U.S.A.">
        <title>Complete genome sequence of Clostridium perfringens, an anaerobic flesh-eater.</title>
        <authorList>
            <person name="Shimizu T."/>
            <person name="Ohtani K."/>
            <person name="Hirakawa H."/>
            <person name="Ohshima K."/>
            <person name="Yamashita A."/>
            <person name="Shiba T."/>
            <person name="Ogasawara N."/>
            <person name="Hattori M."/>
            <person name="Kuhara S."/>
            <person name="Hayashi H."/>
        </authorList>
    </citation>
    <scope>NUCLEOTIDE SEQUENCE [LARGE SCALE GENOMIC DNA]</scope>
    <source>
        <strain>13 / Type A</strain>
    </source>
</reference>
<evidence type="ECO:0000250" key="1"/>
<evidence type="ECO:0000255" key="2">
    <source>
        <dbReference type="HAMAP-Rule" id="MF_00118"/>
    </source>
</evidence>
<gene>
    <name evidence="2" type="primary">tufA</name>
    <name type="ordered locus">CPE2407</name>
</gene>
<gene>
    <name evidence="2" type="primary">tufB</name>
    <name type="ordered locus">CPE2421</name>
</gene>
<proteinExistence type="inferred from homology"/>
<sequence>MSKAKFERSKPHVNIGTIGHVDHGKTTLTAAITTVLAQAGGAEAFKYDEIDKAPEEKERGITINTAHVEYETANRHYAHVDCPGHADYVKNMITGAAQMDGAILVCSAADGPMPQTREHILLSSRVGVDHIVVFLNKADMVDDEELLELVEMEVRELLSEYNFPGDDIPVIKGSALVALENPTDEAATACIRELMDAVDSYIPTPERATDKPFLMPVEDVFTITGRGTVATGRVERGVLHVGDEVEVIGLTEERRKTVVTGIEMFRKLLDEAQAGDNIGALLRGIQRTDIERGQVLAQVGTINPHKKFVGQVYVLKKEEGGRHTPFFDGYRPQFYFRTTDVTGSIKLPEGMEMVMPGDHIDMEVELITEIAMDEGLRFAIREGGRTVGSGVVTSIIE</sequence>
<name>EFTU_CLOPE</name>
<feature type="chain" id="PRO_0000091313" description="Elongation factor Tu">
    <location>
        <begin position="1"/>
        <end position="397"/>
    </location>
</feature>
<feature type="domain" description="tr-type G">
    <location>
        <begin position="10"/>
        <end position="206"/>
    </location>
</feature>
<feature type="region of interest" description="G1" evidence="1">
    <location>
        <begin position="19"/>
        <end position="26"/>
    </location>
</feature>
<feature type="region of interest" description="G2" evidence="1">
    <location>
        <begin position="60"/>
        <end position="64"/>
    </location>
</feature>
<feature type="region of interest" description="G3" evidence="1">
    <location>
        <begin position="81"/>
        <end position="84"/>
    </location>
</feature>
<feature type="region of interest" description="G4" evidence="1">
    <location>
        <begin position="136"/>
        <end position="139"/>
    </location>
</feature>
<feature type="region of interest" description="G5" evidence="1">
    <location>
        <begin position="174"/>
        <end position="176"/>
    </location>
</feature>
<feature type="binding site" evidence="2">
    <location>
        <begin position="19"/>
        <end position="26"/>
    </location>
    <ligand>
        <name>GTP</name>
        <dbReference type="ChEBI" id="CHEBI:37565"/>
    </ligand>
</feature>
<feature type="binding site" evidence="2">
    <location>
        <position position="26"/>
    </location>
    <ligand>
        <name>Mg(2+)</name>
        <dbReference type="ChEBI" id="CHEBI:18420"/>
    </ligand>
</feature>
<feature type="binding site" evidence="2">
    <location>
        <begin position="81"/>
        <end position="85"/>
    </location>
    <ligand>
        <name>GTP</name>
        <dbReference type="ChEBI" id="CHEBI:37565"/>
    </ligand>
</feature>
<feature type="binding site" evidence="2">
    <location>
        <begin position="136"/>
        <end position="139"/>
    </location>
    <ligand>
        <name>GTP</name>
        <dbReference type="ChEBI" id="CHEBI:37565"/>
    </ligand>
</feature>
<accession>Q8XFP8</accession>
<protein>
    <recommendedName>
        <fullName evidence="2">Elongation factor Tu</fullName>
        <shortName evidence="2">EF-Tu</shortName>
        <ecNumber evidence="2">3.6.5.3</ecNumber>
    </recommendedName>
</protein>
<organism>
    <name type="scientific">Clostridium perfringens (strain 13 / Type A)</name>
    <dbReference type="NCBI Taxonomy" id="195102"/>
    <lineage>
        <taxon>Bacteria</taxon>
        <taxon>Bacillati</taxon>
        <taxon>Bacillota</taxon>
        <taxon>Clostridia</taxon>
        <taxon>Eubacteriales</taxon>
        <taxon>Clostridiaceae</taxon>
        <taxon>Clostridium</taxon>
    </lineage>
</organism>
<keyword id="KW-0963">Cytoplasm</keyword>
<keyword id="KW-0251">Elongation factor</keyword>
<keyword id="KW-0342">GTP-binding</keyword>
<keyword id="KW-0378">Hydrolase</keyword>
<keyword id="KW-0460">Magnesium</keyword>
<keyword id="KW-0479">Metal-binding</keyword>
<keyword id="KW-0547">Nucleotide-binding</keyword>
<keyword id="KW-0648">Protein biosynthesis</keyword>
<keyword id="KW-1185">Reference proteome</keyword>
<comment type="function">
    <text evidence="2">GTP hydrolase that promotes the GTP-dependent binding of aminoacyl-tRNA to the A-site of ribosomes during protein biosynthesis.</text>
</comment>
<comment type="catalytic activity">
    <reaction evidence="2">
        <text>GTP + H2O = GDP + phosphate + H(+)</text>
        <dbReference type="Rhea" id="RHEA:19669"/>
        <dbReference type="ChEBI" id="CHEBI:15377"/>
        <dbReference type="ChEBI" id="CHEBI:15378"/>
        <dbReference type="ChEBI" id="CHEBI:37565"/>
        <dbReference type="ChEBI" id="CHEBI:43474"/>
        <dbReference type="ChEBI" id="CHEBI:58189"/>
        <dbReference type="EC" id="3.6.5.3"/>
    </reaction>
    <physiologicalReaction direction="left-to-right" evidence="2">
        <dbReference type="Rhea" id="RHEA:19670"/>
    </physiologicalReaction>
</comment>
<comment type="subunit">
    <text evidence="2">Monomer.</text>
</comment>
<comment type="subcellular location">
    <subcellularLocation>
        <location evidence="2">Cytoplasm</location>
    </subcellularLocation>
</comment>
<comment type="similarity">
    <text evidence="2">Belongs to the TRAFAC class translation factor GTPase superfamily. Classic translation factor GTPase family. EF-Tu/EF-1A subfamily.</text>
</comment>
<dbReference type="EC" id="3.6.5.3" evidence="2"/>
<dbReference type="EMBL" id="BA000016">
    <property type="protein sequence ID" value="BAB82113.1"/>
    <property type="molecule type" value="Genomic_DNA"/>
</dbReference>
<dbReference type="EMBL" id="BA000016">
    <property type="protein sequence ID" value="BAB82127.1"/>
    <property type="molecule type" value="Genomic_DNA"/>
</dbReference>
<dbReference type="SMR" id="Q8XFP8"/>
<dbReference type="STRING" id="195102.gene:10491724"/>
<dbReference type="KEGG" id="cpe:CPE2407"/>
<dbReference type="KEGG" id="cpe:CPE2421"/>
<dbReference type="HOGENOM" id="CLU_007265_0_1_9"/>
<dbReference type="Proteomes" id="UP000000818">
    <property type="component" value="Chromosome"/>
</dbReference>
<dbReference type="GO" id="GO:0005829">
    <property type="term" value="C:cytosol"/>
    <property type="evidence" value="ECO:0007669"/>
    <property type="project" value="TreeGrafter"/>
</dbReference>
<dbReference type="GO" id="GO:0005525">
    <property type="term" value="F:GTP binding"/>
    <property type="evidence" value="ECO:0007669"/>
    <property type="project" value="UniProtKB-UniRule"/>
</dbReference>
<dbReference type="GO" id="GO:0003924">
    <property type="term" value="F:GTPase activity"/>
    <property type="evidence" value="ECO:0007669"/>
    <property type="project" value="InterPro"/>
</dbReference>
<dbReference type="GO" id="GO:0003746">
    <property type="term" value="F:translation elongation factor activity"/>
    <property type="evidence" value="ECO:0007669"/>
    <property type="project" value="UniProtKB-UniRule"/>
</dbReference>
<dbReference type="CDD" id="cd01884">
    <property type="entry name" value="EF_Tu"/>
    <property type="match status" value="1"/>
</dbReference>
<dbReference type="CDD" id="cd03697">
    <property type="entry name" value="EFTU_II"/>
    <property type="match status" value="1"/>
</dbReference>
<dbReference type="CDD" id="cd03707">
    <property type="entry name" value="EFTU_III"/>
    <property type="match status" value="1"/>
</dbReference>
<dbReference type="FunFam" id="2.40.30.10:FF:000001">
    <property type="entry name" value="Elongation factor Tu"/>
    <property type="match status" value="1"/>
</dbReference>
<dbReference type="FunFam" id="3.40.50.300:FF:000003">
    <property type="entry name" value="Elongation factor Tu"/>
    <property type="match status" value="1"/>
</dbReference>
<dbReference type="Gene3D" id="3.40.50.300">
    <property type="entry name" value="P-loop containing nucleotide triphosphate hydrolases"/>
    <property type="match status" value="1"/>
</dbReference>
<dbReference type="Gene3D" id="2.40.30.10">
    <property type="entry name" value="Translation factors"/>
    <property type="match status" value="2"/>
</dbReference>
<dbReference type="HAMAP" id="MF_00118_B">
    <property type="entry name" value="EF_Tu_B"/>
    <property type="match status" value="1"/>
</dbReference>
<dbReference type="InterPro" id="IPR041709">
    <property type="entry name" value="EF-Tu_GTP-bd"/>
</dbReference>
<dbReference type="InterPro" id="IPR050055">
    <property type="entry name" value="EF-Tu_GTPase"/>
</dbReference>
<dbReference type="InterPro" id="IPR004161">
    <property type="entry name" value="EFTu-like_2"/>
</dbReference>
<dbReference type="InterPro" id="IPR033720">
    <property type="entry name" value="EFTU_2"/>
</dbReference>
<dbReference type="InterPro" id="IPR031157">
    <property type="entry name" value="G_TR_CS"/>
</dbReference>
<dbReference type="InterPro" id="IPR027417">
    <property type="entry name" value="P-loop_NTPase"/>
</dbReference>
<dbReference type="InterPro" id="IPR005225">
    <property type="entry name" value="Small_GTP-bd"/>
</dbReference>
<dbReference type="InterPro" id="IPR000795">
    <property type="entry name" value="T_Tr_GTP-bd_dom"/>
</dbReference>
<dbReference type="InterPro" id="IPR009000">
    <property type="entry name" value="Transl_B-barrel_sf"/>
</dbReference>
<dbReference type="InterPro" id="IPR009001">
    <property type="entry name" value="Transl_elong_EF1A/Init_IF2_C"/>
</dbReference>
<dbReference type="InterPro" id="IPR004541">
    <property type="entry name" value="Transl_elong_EFTu/EF1A_bac/org"/>
</dbReference>
<dbReference type="InterPro" id="IPR004160">
    <property type="entry name" value="Transl_elong_EFTu/EF1A_C"/>
</dbReference>
<dbReference type="NCBIfam" id="TIGR00485">
    <property type="entry name" value="EF-Tu"/>
    <property type="match status" value="1"/>
</dbReference>
<dbReference type="NCBIfam" id="NF000766">
    <property type="entry name" value="PRK00049.1"/>
    <property type="match status" value="1"/>
</dbReference>
<dbReference type="NCBIfam" id="NF009372">
    <property type="entry name" value="PRK12735.1"/>
    <property type="match status" value="1"/>
</dbReference>
<dbReference type="NCBIfam" id="NF009373">
    <property type="entry name" value="PRK12736.1"/>
    <property type="match status" value="1"/>
</dbReference>
<dbReference type="NCBIfam" id="TIGR00231">
    <property type="entry name" value="small_GTP"/>
    <property type="match status" value="1"/>
</dbReference>
<dbReference type="PANTHER" id="PTHR43721:SF22">
    <property type="entry name" value="ELONGATION FACTOR TU, MITOCHONDRIAL"/>
    <property type="match status" value="1"/>
</dbReference>
<dbReference type="PANTHER" id="PTHR43721">
    <property type="entry name" value="ELONGATION FACTOR TU-RELATED"/>
    <property type="match status" value="1"/>
</dbReference>
<dbReference type="Pfam" id="PF00009">
    <property type="entry name" value="GTP_EFTU"/>
    <property type="match status" value="1"/>
</dbReference>
<dbReference type="Pfam" id="PF03144">
    <property type="entry name" value="GTP_EFTU_D2"/>
    <property type="match status" value="1"/>
</dbReference>
<dbReference type="Pfam" id="PF03143">
    <property type="entry name" value="GTP_EFTU_D3"/>
    <property type="match status" value="1"/>
</dbReference>
<dbReference type="PRINTS" id="PR00315">
    <property type="entry name" value="ELONGATNFCT"/>
</dbReference>
<dbReference type="SUPFAM" id="SSF50465">
    <property type="entry name" value="EF-Tu/eEF-1alpha/eIF2-gamma C-terminal domain"/>
    <property type="match status" value="1"/>
</dbReference>
<dbReference type="SUPFAM" id="SSF52540">
    <property type="entry name" value="P-loop containing nucleoside triphosphate hydrolases"/>
    <property type="match status" value="1"/>
</dbReference>
<dbReference type="SUPFAM" id="SSF50447">
    <property type="entry name" value="Translation proteins"/>
    <property type="match status" value="1"/>
</dbReference>
<dbReference type="PROSITE" id="PS00301">
    <property type="entry name" value="G_TR_1"/>
    <property type="match status" value="1"/>
</dbReference>
<dbReference type="PROSITE" id="PS51722">
    <property type="entry name" value="G_TR_2"/>
    <property type="match status" value="1"/>
</dbReference>